<accession>B1IKG3</accession>
<sequence length="162" mass="17318">MDIKEIKVGIADLNVGKNPDKIITVGLGSCIGIALYDGIKCIGGLSHIMLPDSTQFSKVTNPMKFADLAIPILVEKMEKLGARKNGLKAKICGGASMFNFSDKSMVMDIGNRNGKAVKEKLKELSIPLLAEDIGGNKGRTMIFDTSTGKVYIKTVGLGTKEI</sequence>
<dbReference type="EC" id="3.5.1.44" evidence="1"/>
<dbReference type="EMBL" id="CP000939">
    <property type="protein sequence ID" value="ACA46655.1"/>
    <property type="molecule type" value="Genomic_DNA"/>
</dbReference>
<dbReference type="RefSeq" id="WP_003359122.1">
    <property type="nucleotide sequence ID" value="NC_010516.1"/>
</dbReference>
<dbReference type="SMR" id="B1IKG3"/>
<dbReference type="KEGG" id="cbb:CLD_1823"/>
<dbReference type="HOGENOM" id="CLU_087854_2_0_9"/>
<dbReference type="Proteomes" id="UP000008541">
    <property type="component" value="Chromosome"/>
</dbReference>
<dbReference type="GO" id="GO:0050568">
    <property type="term" value="F:protein-glutamine glutaminase activity"/>
    <property type="evidence" value="ECO:0007669"/>
    <property type="project" value="UniProtKB-UniRule"/>
</dbReference>
<dbReference type="GO" id="GO:0006935">
    <property type="term" value="P:chemotaxis"/>
    <property type="evidence" value="ECO:0007669"/>
    <property type="project" value="UniProtKB-UniRule"/>
</dbReference>
<dbReference type="CDD" id="cd16352">
    <property type="entry name" value="CheD"/>
    <property type="match status" value="1"/>
</dbReference>
<dbReference type="Gene3D" id="3.30.1330.200">
    <property type="match status" value="1"/>
</dbReference>
<dbReference type="HAMAP" id="MF_01440">
    <property type="entry name" value="CheD"/>
    <property type="match status" value="1"/>
</dbReference>
<dbReference type="InterPro" id="IPR038592">
    <property type="entry name" value="CheD-like_sf"/>
</dbReference>
<dbReference type="InterPro" id="IPR005659">
    <property type="entry name" value="Chemorcpt_Glu_NH3ase_CheD"/>
</dbReference>
<dbReference type="InterPro" id="IPR011324">
    <property type="entry name" value="Cytotoxic_necrot_fac-like_cat"/>
</dbReference>
<dbReference type="NCBIfam" id="NF010015">
    <property type="entry name" value="PRK13490.1"/>
    <property type="match status" value="1"/>
</dbReference>
<dbReference type="PANTHER" id="PTHR35147">
    <property type="entry name" value="CHEMORECEPTOR GLUTAMINE DEAMIDASE CHED-RELATED"/>
    <property type="match status" value="1"/>
</dbReference>
<dbReference type="PANTHER" id="PTHR35147:SF1">
    <property type="entry name" value="CHEMORECEPTOR GLUTAMINE DEAMIDASE CHED-RELATED"/>
    <property type="match status" value="1"/>
</dbReference>
<dbReference type="Pfam" id="PF03975">
    <property type="entry name" value="CheD"/>
    <property type="match status" value="1"/>
</dbReference>
<dbReference type="SUPFAM" id="SSF64438">
    <property type="entry name" value="CNF1/YfiH-like putative cysteine hydrolases"/>
    <property type="match status" value="1"/>
</dbReference>
<evidence type="ECO:0000255" key="1">
    <source>
        <dbReference type="HAMAP-Rule" id="MF_01440"/>
    </source>
</evidence>
<protein>
    <recommendedName>
        <fullName evidence="1">Probable chemoreceptor glutamine deamidase CheD</fullName>
        <ecNumber evidence="1">3.5.1.44</ecNumber>
    </recommendedName>
</protein>
<keyword id="KW-0145">Chemotaxis</keyword>
<keyword id="KW-0378">Hydrolase</keyword>
<name>CHED_CLOBK</name>
<feature type="chain" id="PRO_1000145889" description="Probable chemoreceptor glutamine deamidase CheD">
    <location>
        <begin position="1"/>
        <end position="162"/>
    </location>
</feature>
<proteinExistence type="inferred from homology"/>
<comment type="function">
    <text evidence="1">Probably deamidates glutamine residues to glutamate on methyl-accepting chemotaxis receptors (MCPs), playing an important role in chemotaxis.</text>
</comment>
<comment type="catalytic activity">
    <reaction evidence="1">
        <text>L-glutaminyl-[protein] + H2O = L-glutamyl-[protein] + NH4(+)</text>
        <dbReference type="Rhea" id="RHEA:16441"/>
        <dbReference type="Rhea" id="RHEA-COMP:10207"/>
        <dbReference type="Rhea" id="RHEA-COMP:10208"/>
        <dbReference type="ChEBI" id="CHEBI:15377"/>
        <dbReference type="ChEBI" id="CHEBI:28938"/>
        <dbReference type="ChEBI" id="CHEBI:29973"/>
        <dbReference type="ChEBI" id="CHEBI:30011"/>
        <dbReference type="EC" id="3.5.1.44"/>
    </reaction>
</comment>
<comment type="similarity">
    <text evidence="1">Belongs to the CheD family.</text>
</comment>
<organism>
    <name type="scientific">Clostridium botulinum (strain Okra / Type B1)</name>
    <dbReference type="NCBI Taxonomy" id="498213"/>
    <lineage>
        <taxon>Bacteria</taxon>
        <taxon>Bacillati</taxon>
        <taxon>Bacillota</taxon>
        <taxon>Clostridia</taxon>
        <taxon>Eubacteriales</taxon>
        <taxon>Clostridiaceae</taxon>
        <taxon>Clostridium</taxon>
    </lineage>
</organism>
<gene>
    <name evidence="1" type="primary">cheD</name>
    <name type="ordered locus">CLD_1823</name>
</gene>
<reference key="1">
    <citation type="journal article" date="2007" name="PLoS ONE">
        <title>Analysis of the neurotoxin complex genes in Clostridium botulinum A1-A4 and B1 strains: BoNT/A3, /Ba4 and /B1 clusters are located within plasmids.</title>
        <authorList>
            <person name="Smith T.J."/>
            <person name="Hill K.K."/>
            <person name="Foley B.T."/>
            <person name="Detter J.C."/>
            <person name="Munk A.C."/>
            <person name="Bruce D.C."/>
            <person name="Doggett N.A."/>
            <person name="Smith L.A."/>
            <person name="Marks J.D."/>
            <person name="Xie G."/>
            <person name="Brettin T.S."/>
        </authorList>
    </citation>
    <scope>NUCLEOTIDE SEQUENCE [LARGE SCALE GENOMIC DNA]</scope>
    <source>
        <strain>Okra / Type B1</strain>
    </source>
</reference>